<proteinExistence type="inferred from homology"/>
<evidence type="ECO:0000250" key="1"/>
<evidence type="ECO:0000255" key="2">
    <source>
        <dbReference type="PROSITE-ProRule" id="PRU00541"/>
    </source>
</evidence>
<evidence type="ECO:0000255" key="3">
    <source>
        <dbReference type="PROSITE-ProRule" id="PRU00542"/>
    </source>
</evidence>
<evidence type="ECO:0000256" key="4">
    <source>
        <dbReference type="SAM" id="MobiDB-lite"/>
    </source>
</evidence>
<evidence type="ECO:0000305" key="5"/>
<feature type="chain" id="PRO_0000285138" description="ATP-dependent RNA helicase DBP2">
    <location>
        <begin position="1"/>
        <end position="530"/>
    </location>
</feature>
<feature type="domain" description="Helicase ATP-binding" evidence="2">
    <location>
        <begin position="128"/>
        <end position="303"/>
    </location>
</feature>
<feature type="domain" description="Helicase C-terminal" evidence="3">
    <location>
        <begin position="318"/>
        <end position="478"/>
    </location>
</feature>
<feature type="region of interest" description="Disordered" evidence="4">
    <location>
        <begin position="1"/>
        <end position="23"/>
    </location>
</feature>
<feature type="region of interest" description="Disordered" evidence="4">
    <location>
        <begin position="493"/>
        <end position="530"/>
    </location>
</feature>
<feature type="short sequence motif" description="Q motif">
    <location>
        <begin position="97"/>
        <end position="125"/>
    </location>
</feature>
<feature type="short sequence motif" description="DEAD box">
    <location>
        <begin position="251"/>
        <end position="254"/>
    </location>
</feature>
<feature type="compositionally biased region" description="Gly residues" evidence="4">
    <location>
        <begin position="493"/>
        <end position="512"/>
    </location>
</feature>
<feature type="compositionally biased region" description="Polar residues" evidence="4">
    <location>
        <begin position="514"/>
        <end position="530"/>
    </location>
</feature>
<feature type="binding site" evidence="2">
    <location>
        <begin position="141"/>
        <end position="148"/>
    </location>
    <ligand>
        <name>ATP</name>
        <dbReference type="ChEBI" id="CHEBI:30616"/>
    </ligand>
</feature>
<comment type="function">
    <text evidence="1">ATP-dependent RNA helicase involved nonsense-mediated mRNA decay and ribosome biogenesis through rRNA processing.</text>
</comment>
<comment type="catalytic activity">
    <reaction>
        <text>ATP + H2O = ADP + phosphate + H(+)</text>
        <dbReference type="Rhea" id="RHEA:13065"/>
        <dbReference type="ChEBI" id="CHEBI:15377"/>
        <dbReference type="ChEBI" id="CHEBI:15378"/>
        <dbReference type="ChEBI" id="CHEBI:30616"/>
        <dbReference type="ChEBI" id="CHEBI:43474"/>
        <dbReference type="ChEBI" id="CHEBI:456216"/>
        <dbReference type="EC" id="3.6.4.13"/>
    </reaction>
</comment>
<comment type="subunit">
    <text evidence="1">Associates with polysomes.</text>
</comment>
<comment type="subcellular location">
    <subcellularLocation>
        <location evidence="1">Cytoplasm</location>
    </subcellularLocation>
    <subcellularLocation>
        <location evidence="1">Nucleus</location>
    </subcellularLocation>
</comment>
<comment type="domain">
    <text>The Q motif is unique to and characteristic of the DEAD box family of RNA helicases and controls ATP binding and hydrolysis.</text>
</comment>
<comment type="similarity">
    <text evidence="5">Belongs to the DEAD box helicase family. DDX5/DBP2 subfamily.</text>
</comment>
<organism>
    <name type="scientific">Scheffersomyces stipitis (strain ATCC 58785 / CBS 6054 / NBRC 10063 / NRRL Y-11545)</name>
    <name type="common">Yeast</name>
    <name type="synonym">Pichia stipitis</name>
    <dbReference type="NCBI Taxonomy" id="322104"/>
    <lineage>
        <taxon>Eukaryota</taxon>
        <taxon>Fungi</taxon>
        <taxon>Dikarya</taxon>
        <taxon>Ascomycota</taxon>
        <taxon>Saccharomycotina</taxon>
        <taxon>Pichiomycetes</taxon>
        <taxon>Debaryomycetaceae</taxon>
        <taxon>Scheffersomyces</taxon>
    </lineage>
</organism>
<dbReference type="EC" id="3.6.4.13"/>
<dbReference type="EMBL" id="CP000497">
    <property type="protein sequence ID" value="ABN65631.1"/>
    <property type="molecule type" value="Genomic_DNA"/>
</dbReference>
<dbReference type="RefSeq" id="XP_001383660.1">
    <property type="nucleotide sequence ID" value="XM_001383623.1"/>
</dbReference>
<dbReference type="SMR" id="A3LQW7"/>
<dbReference type="FunCoup" id="A3LQW7">
    <property type="interactions" value="1239"/>
</dbReference>
<dbReference type="STRING" id="322104.A3LQW7"/>
<dbReference type="GeneID" id="4838019"/>
<dbReference type="KEGG" id="pic:PICST_82821"/>
<dbReference type="eggNOG" id="KOG0331">
    <property type="taxonomic scope" value="Eukaryota"/>
</dbReference>
<dbReference type="HOGENOM" id="CLU_003041_16_9_1"/>
<dbReference type="InParanoid" id="A3LQW7"/>
<dbReference type="OMA" id="STMPKFE"/>
<dbReference type="OrthoDB" id="196131at2759"/>
<dbReference type="Proteomes" id="UP000002258">
    <property type="component" value="Chromosome 3"/>
</dbReference>
<dbReference type="GO" id="GO:0005737">
    <property type="term" value="C:cytoplasm"/>
    <property type="evidence" value="ECO:0007669"/>
    <property type="project" value="UniProtKB-SubCell"/>
</dbReference>
<dbReference type="GO" id="GO:0005634">
    <property type="term" value="C:nucleus"/>
    <property type="evidence" value="ECO:0007669"/>
    <property type="project" value="UniProtKB-SubCell"/>
</dbReference>
<dbReference type="GO" id="GO:0005524">
    <property type="term" value="F:ATP binding"/>
    <property type="evidence" value="ECO:0007669"/>
    <property type="project" value="UniProtKB-KW"/>
</dbReference>
<dbReference type="GO" id="GO:0016887">
    <property type="term" value="F:ATP hydrolysis activity"/>
    <property type="evidence" value="ECO:0007669"/>
    <property type="project" value="RHEA"/>
</dbReference>
<dbReference type="GO" id="GO:0051880">
    <property type="term" value="F:G-quadruplex DNA binding"/>
    <property type="evidence" value="ECO:0007669"/>
    <property type="project" value="EnsemblFungi"/>
</dbReference>
<dbReference type="GO" id="GO:0002151">
    <property type="term" value="F:G-quadruplex RNA binding"/>
    <property type="evidence" value="ECO:0007669"/>
    <property type="project" value="EnsemblFungi"/>
</dbReference>
<dbReference type="GO" id="GO:0003729">
    <property type="term" value="F:mRNA binding"/>
    <property type="evidence" value="ECO:0007669"/>
    <property type="project" value="EnsemblFungi"/>
</dbReference>
<dbReference type="GO" id="GO:0003724">
    <property type="term" value="F:RNA helicase activity"/>
    <property type="evidence" value="ECO:0007669"/>
    <property type="project" value="UniProtKB-EC"/>
</dbReference>
<dbReference type="GO" id="GO:0030515">
    <property type="term" value="F:snoRNA binding"/>
    <property type="evidence" value="ECO:0007669"/>
    <property type="project" value="EnsemblFungi"/>
</dbReference>
<dbReference type="GO" id="GO:0071042">
    <property type="term" value="P:nuclear polyadenylation-dependent mRNA catabolic process"/>
    <property type="evidence" value="ECO:0007669"/>
    <property type="project" value="EnsemblFungi"/>
</dbReference>
<dbReference type="GO" id="GO:0000184">
    <property type="term" value="P:nuclear-transcribed mRNA catabolic process, nonsense-mediated decay"/>
    <property type="evidence" value="ECO:0007669"/>
    <property type="project" value="UniProtKB-KW"/>
</dbReference>
<dbReference type="GO" id="GO:0006364">
    <property type="term" value="P:rRNA processing"/>
    <property type="evidence" value="ECO:0007669"/>
    <property type="project" value="UniProtKB-KW"/>
</dbReference>
<dbReference type="GO" id="GO:0006369">
    <property type="term" value="P:termination of RNA polymerase II transcription"/>
    <property type="evidence" value="ECO:0007669"/>
    <property type="project" value="EnsemblFungi"/>
</dbReference>
<dbReference type="CDD" id="cd17966">
    <property type="entry name" value="DEADc_DDX5_DDX17"/>
    <property type="match status" value="1"/>
</dbReference>
<dbReference type="CDD" id="cd18787">
    <property type="entry name" value="SF2_C_DEAD"/>
    <property type="match status" value="1"/>
</dbReference>
<dbReference type="FunFam" id="3.40.50.300:FF:000008">
    <property type="entry name" value="ATP-dependent RNA helicase RhlB"/>
    <property type="match status" value="1"/>
</dbReference>
<dbReference type="FunFam" id="3.40.50.300:FF:000079">
    <property type="entry name" value="probable ATP-dependent RNA helicase DDX17"/>
    <property type="match status" value="1"/>
</dbReference>
<dbReference type="Gene3D" id="3.40.50.300">
    <property type="entry name" value="P-loop containing nucleotide triphosphate hydrolases"/>
    <property type="match status" value="2"/>
</dbReference>
<dbReference type="InterPro" id="IPR011545">
    <property type="entry name" value="DEAD/DEAH_box_helicase_dom"/>
</dbReference>
<dbReference type="InterPro" id="IPR014001">
    <property type="entry name" value="Helicase_ATP-bd"/>
</dbReference>
<dbReference type="InterPro" id="IPR001650">
    <property type="entry name" value="Helicase_C-like"/>
</dbReference>
<dbReference type="InterPro" id="IPR027417">
    <property type="entry name" value="P-loop_NTPase"/>
</dbReference>
<dbReference type="InterPro" id="IPR000629">
    <property type="entry name" value="RNA-helicase_DEAD-box_CS"/>
</dbReference>
<dbReference type="InterPro" id="IPR014014">
    <property type="entry name" value="RNA_helicase_DEAD_Q_motif"/>
</dbReference>
<dbReference type="PANTHER" id="PTHR47958">
    <property type="entry name" value="ATP-DEPENDENT RNA HELICASE DBP3"/>
    <property type="match status" value="1"/>
</dbReference>
<dbReference type="Pfam" id="PF00270">
    <property type="entry name" value="DEAD"/>
    <property type="match status" value="1"/>
</dbReference>
<dbReference type="Pfam" id="PF00271">
    <property type="entry name" value="Helicase_C"/>
    <property type="match status" value="1"/>
</dbReference>
<dbReference type="SMART" id="SM00487">
    <property type="entry name" value="DEXDc"/>
    <property type="match status" value="1"/>
</dbReference>
<dbReference type="SMART" id="SM00490">
    <property type="entry name" value="HELICc"/>
    <property type="match status" value="1"/>
</dbReference>
<dbReference type="SUPFAM" id="SSF52540">
    <property type="entry name" value="P-loop containing nucleoside triphosphate hydrolases"/>
    <property type="match status" value="1"/>
</dbReference>
<dbReference type="PROSITE" id="PS00039">
    <property type="entry name" value="DEAD_ATP_HELICASE"/>
    <property type="match status" value="1"/>
</dbReference>
<dbReference type="PROSITE" id="PS51192">
    <property type="entry name" value="HELICASE_ATP_BIND_1"/>
    <property type="match status" value="1"/>
</dbReference>
<dbReference type="PROSITE" id="PS51194">
    <property type="entry name" value="HELICASE_CTER"/>
    <property type="match status" value="1"/>
</dbReference>
<dbReference type="PROSITE" id="PS51195">
    <property type="entry name" value="Q_MOTIF"/>
    <property type="match status" value="1"/>
</dbReference>
<protein>
    <recommendedName>
        <fullName>ATP-dependent RNA helicase DBP2</fullName>
        <ecNumber>3.6.4.13</ecNumber>
    </recommendedName>
</protein>
<gene>
    <name type="primary">DBP2</name>
    <name type="ORF">PICST_82821</name>
</gene>
<name>DBP2_PICST</name>
<sequence>MNNYNNGDYKGGREQHFGGNNNYNRGYGGNGGFGGNRYNERVELTTPDWDLESLPKFEKNFYTEHPDVAARSDKDIAAFRNEHQMSCLGSDIPHPITTFDEAGFPEYVLNEVKAQGFPSPTAIQCQGWPMALSGRDMVGIAATGSGKTLSYCLPAIVHINAQPLLSPGDGPVVLVLAPTRELAVQIQQECSKFGSSSRIRNTCVYGGAPKGQQIRDLARGVEIVIATPGRLIDMLEMGKTNLKRVTYLVLDEADRMLDMGFEPQIRKIVDQIRPDRQTLMWSATWPKEVQNLARDYLQDPIQVRIGSLELAASHTITQVVEVISEYEKRDRLVKHLETATTEKESKVLIFASTKKTCDEVTSYLRADGWPALAIHGDKQQSERDWVLREFKTGKSPIMVATDVAARGIDVKGINFVINFDMPGNIEDYVHRIGRTGRGGATGTAVSFFTDGNNKLGGDLCKIMREAKQTIPPELQRFDRKSFGAHIRYGGGRGGRGGYGRGRGGYGGRGGYGQRNYQTGSNQAPLSNRRF</sequence>
<reference key="1">
    <citation type="journal article" date="2007" name="Nat. Biotechnol.">
        <title>Genome sequence of the lignocellulose-bioconverting and xylose-fermenting yeast Pichia stipitis.</title>
        <authorList>
            <person name="Jeffries T.W."/>
            <person name="Grigoriev I.V."/>
            <person name="Grimwood J."/>
            <person name="Laplaza J.M."/>
            <person name="Aerts A."/>
            <person name="Salamov A."/>
            <person name="Schmutz J."/>
            <person name="Lindquist E."/>
            <person name="Dehal P."/>
            <person name="Shapiro H."/>
            <person name="Jin Y.-S."/>
            <person name="Passoth V."/>
            <person name="Richardson P.M."/>
        </authorList>
    </citation>
    <scope>NUCLEOTIDE SEQUENCE [LARGE SCALE GENOMIC DNA]</scope>
    <source>
        <strain>ATCC 58785 / CBS 6054 / NBRC 10063 / NRRL Y-11545</strain>
    </source>
</reference>
<accession>A3LQW7</accession>
<keyword id="KW-0067">ATP-binding</keyword>
<keyword id="KW-0963">Cytoplasm</keyword>
<keyword id="KW-0347">Helicase</keyword>
<keyword id="KW-0378">Hydrolase</keyword>
<keyword id="KW-0866">Nonsense-mediated mRNA decay</keyword>
<keyword id="KW-0547">Nucleotide-binding</keyword>
<keyword id="KW-0539">Nucleus</keyword>
<keyword id="KW-1185">Reference proteome</keyword>
<keyword id="KW-0690">Ribosome biogenesis</keyword>
<keyword id="KW-0694">RNA-binding</keyword>
<keyword id="KW-0698">rRNA processing</keyword>